<accession>B3Q8X5</accession>
<feature type="chain" id="PRO_1000195847" description="Protein SlyX homolog">
    <location>
        <begin position="1"/>
        <end position="71"/>
    </location>
</feature>
<feature type="region of interest" description="Disordered" evidence="2">
    <location>
        <begin position="52"/>
        <end position="71"/>
    </location>
</feature>
<comment type="similarity">
    <text evidence="1">Belongs to the SlyX family.</text>
</comment>
<organism>
    <name type="scientific">Rhodopseudomonas palustris (strain TIE-1)</name>
    <dbReference type="NCBI Taxonomy" id="395960"/>
    <lineage>
        <taxon>Bacteria</taxon>
        <taxon>Pseudomonadati</taxon>
        <taxon>Pseudomonadota</taxon>
        <taxon>Alphaproteobacteria</taxon>
        <taxon>Hyphomicrobiales</taxon>
        <taxon>Nitrobacteraceae</taxon>
        <taxon>Rhodopseudomonas</taxon>
    </lineage>
</organism>
<dbReference type="EMBL" id="CP001096">
    <property type="protein sequence ID" value="ACF03396.1"/>
    <property type="molecule type" value="Genomic_DNA"/>
</dbReference>
<dbReference type="RefSeq" id="WP_011159954.1">
    <property type="nucleotide sequence ID" value="NC_011004.1"/>
</dbReference>
<dbReference type="SMR" id="B3Q8X5"/>
<dbReference type="KEGG" id="rpt:Rpal_4907"/>
<dbReference type="HOGENOM" id="CLU_180796_5_3_5"/>
<dbReference type="OrthoDB" id="5422806at2"/>
<dbReference type="Proteomes" id="UP000001725">
    <property type="component" value="Chromosome"/>
</dbReference>
<dbReference type="Gene3D" id="1.20.5.300">
    <property type="match status" value="1"/>
</dbReference>
<dbReference type="HAMAP" id="MF_00715">
    <property type="entry name" value="SlyX"/>
    <property type="match status" value="1"/>
</dbReference>
<dbReference type="InterPro" id="IPR007236">
    <property type="entry name" value="SlyX"/>
</dbReference>
<dbReference type="PANTHER" id="PTHR36508">
    <property type="entry name" value="PROTEIN SLYX"/>
    <property type="match status" value="1"/>
</dbReference>
<dbReference type="PANTHER" id="PTHR36508:SF1">
    <property type="entry name" value="PROTEIN SLYX"/>
    <property type="match status" value="1"/>
</dbReference>
<dbReference type="Pfam" id="PF04102">
    <property type="entry name" value="SlyX"/>
    <property type="match status" value="1"/>
</dbReference>
<dbReference type="SUPFAM" id="SSF144266">
    <property type="entry name" value="MPN010-like"/>
    <property type="match status" value="1"/>
</dbReference>
<protein>
    <recommendedName>
        <fullName evidence="1">Protein SlyX homolog</fullName>
    </recommendedName>
</protein>
<sequence length="71" mass="7895">MAGENDLNDRVEALEVRLAYQDETIEALNQTVTAQWKQIDALTRQLAALSERLDQAESSAGAPANERPPHY</sequence>
<evidence type="ECO:0000255" key="1">
    <source>
        <dbReference type="HAMAP-Rule" id="MF_00715"/>
    </source>
</evidence>
<evidence type="ECO:0000256" key="2">
    <source>
        <dbReference type="SAM" id="MobiDB-lite"/>
    </source>
</evidence>
<gene>
    <name evidence="1" type="primary">slyX</name>
    <name type="ordered locus">Rpal_4907</name>
</gene>
<reference key="1">
    <citation type="submission" date="2008-05" db="EMBL/GenBank/DDBJ databases">
        <title>Complete sequence of Rhodopseudomonas palustris TIE-1.</title>
        <authorList>
            <consortium name="US DOE Joint Genome Institute"/>
            <person name="Lucas S."/>
            <person name="Copeland A."/>
            <person name="Lapidus A."/>
            <person name="Glavina del Rio T."/>
            <person name="Dalin E."/>
            <person name="Tice H."/>
            <person name="Pitluck S."/>
            <person name="Chain P."/>
            <person name="Malfatti S."/>
            <person name="Shin M."/>
            <person name="Vergez L."/>
            <person name="Lang D."/>
            <person name="Schmutz J."/>
            <person name="Larimer F."/>
            <person name="Land M."/>
            <person name="Hauser L."/>
            <person name="Kyrpides N."/>
            <person name="Mikhailova N."/>
            <person name="Emerson D."/>
            <person name="Newman D.K."/>
            <person name="Roden E."/>
            <person name="Richardson P."/>
        </authorList>
    </citation>
    <scope>NUCLEOTIDE SEQUENCE [LARGE SCALE GENOMIC DNA]</scope>
    <source>
        <strain>TIE-1</strain>
    </source>
</reference>
<proteinExistence type="inferred from homology"/>
<name>SLYX_RHOPT</name>